<name>MRAY_BORDL</name>
<dbReference type="EC" id="2.7.8.13" evidence="1"/>
<dbReference type="EMBL" id="CP000976">
    <property type="protein sequence ID" value="ACH93258.1"/>
    <property type="molecule type" value="Genomic_DNA"/>
</dbReference>
<dbReference type="RefSeq" id="WP_012538069.1">
    <property type="nucleotide sequence ID" value="NC_011229.1"/>
</dbReference>
<dbReference type="SMR" id="B5RLC9"/>
<dbReference type="STRING" id="412419.BDU_306"/>
<dbReference type="KEGG" id="bdu:BDU_306"/>
<dbReference type="eggNOG" id="COG0472">
    <property type="taxonomic scope" value="Bacteria"/>
</dbReference>
<dbReference type="HOGENOM" id="CLU_023982_0_0_12"/>
<dbReference type="OrthoDB" id="9805475at2"/>
<dbReference type="UniPathway" id="UPA00219"/>
<dbReference type="Proteomes" id="UP000000611">
    <property type="component" value="Chromosome"/>
</dbReference>
<dbReference type="GO" id="GO:0005886">
    <property type="term" value="C:plasma membrane"/>
    <property type="evidence" value="ECO:0007669"/>
    <property type="project" value="UniProtKB-SubCell"/>
</dbReference>
<dbReference type="GO" id="GO:0046872">
    <property type="term" value="F:metal ion binding"/>
    <property type="evidence" value="ECO:0007669"/>
    <property type="project" value="UniProtKB-KW"/>
</dbReference>
<dbReference type="GO" id="GO:0008963">
    <property type="term" value="F:phospho-N-acetylmuramoyl-pentapeptide-transferase activity"/>
    <property type="evidence" value="ECO:0007669"/>
    <property type="project" value="UniProtKB-UniRule"/>
</dbReference>
<dbReference type="GO" id="GO:0051992">
    <property type="term" value="F:UDP-N-acetylmuramoyl-L-alanyl-D-glutamyl-meso-2,6-diaminopimelyl-D-alanyl-D-alanine:undecaprenyl-phosphate transferase activity"/>
    <property type="evidence" value="ECO:0007669"/>
    <property type="project" value="RHEA"/>
</dbReference>
<dbReference type="GO" id="GO:0051301">
    <property type="term" value="P:cell division"/>
    <property type="evidence" value="ECO:0007669"/>
    <property type="project" value="UniProtKB-KW"/>
</dbReference>
<dbReference type="GO" id="GO:0071555">
    <property type="term" value="P:cell wall organization"/>
    <property type="evidence" value="ECO:0007669"/>
    <property type="project" value="UniProtKB-KW"/>
</dbReference>
<dbReference type="GO" id="GO:0009252">
    <property type="term" value="P:peptidoglycan biosynthetic process"/>
    <property type="evidence" value="ECO:0007669"/>
    <property type="project" value="UniProtKB-UniRule"/>
</dbReference>
<dbReference type="GO" id="GO:0008360">
    <property type="term" value="P:regulation of cell shape"/>
    <property type="evidence" value="ECO:0007669"/>
    <property type="project" value="UniProtKB-KW"/>
</dbReference>
<dbReference type="CDD" id="cd06852">
    <property type="entry name" value="GT_MraY"/>
    <property type="match status" value="1"/>
</dbReference>
<dbReference type="HAMAP" id="MF_00038">
    <property type="entry name" value="MraY"/>
    <property type="match status" value="1"/>
</dbReference>
<dbReference type="InterPro" id="IPR000715">
    <property type="entry name" value="Glycosyl_transferase_4"/>
</dbReference>
<dbReference type="InterPro" id="IPR003524">
    <property type="entry name" value="PNAcMuramoyl-5peptid_Trfase"/>
</dbReference>
<dbReference type="InterPro" id="IPR018480">
    <property type="entry name" value="PNAcMuramoyl-5peptid_Trfase_CS"/>
</dbReference>
<dbReference type="NCBIfam" id="TIGR00445">
    <property type="entry name" value="mraY"/>
    <property type="match status" value="1"/>
</dbReference>
<dbReference type="PANTHER" id="PTHR22926">
    <property type="entry name" value="PHOSPHO-N-ACETYLMURAMOYL-PENTAPEPTIDE-TRANSFERASE"/>
    <property type="match status" value="1"/>
</dbReference>
<dbReference type="PANTHER" id="PTHR22926:SF5">
    <property type="entry name" value="PHOSPHO-N-ACETYLMURAMOYL-PENTAPEPTIDE-TRANSFERASE HOMOLOG"/>
    <property type="match status" value="1"/>
</dbReference>
<dbReference type="Pfam" id="PF00953">
    <property type="entry name" value="Glycos_transf_4"/>
    <property type="match status" value="1"/>
</dbReference>
<dbReference type="PROSITE" id="PS01347">
    <property type="entry name" value="MRAY_1"/>
    <property type="match status" value="1"/>
</dbReference>
<dbReference type="PROSITE" id="PS01348">
    <property type="entry name" value="MRAY_2"/>
    <property type="match status" value="1"/>
</dbReference>
<sequence>MFCFLGLRLLKYITFRTAYATIFAFLLALIFGPFIISRLKKLKLDQILRKDGPKRHLSEKMGIPTMGGVLIFFCVLVSLFFWIHFFNIYFLIVLFVMVSFACLGFTDDLLKIKRKNSDGLNPKFKIYGQILFSFISVVMLYYFGGEHVSILYFPFFKSLKLDLGILYIPFGMFVLISASNSFNLTDGLDGLAIGLSIVVIGALIIIAYLTSRVDFALYLNIPNVKGCEELVIFLGALLGGSFGFLWFNAYPAKIMMGDTGSLSIGAVLGMVALILKSEILFAILAGVFVVETLSVIIQVVVYKKTKKRVFKMAPLHHHFEELGWSEMQVVIRFWIIGLIFAILALSTIKIR</sequence>
<keyword id="KW-0131">Cell cycle</keyword>
<keyword id="KW-0132">Cell division</keyword>
<keyword id="KW-0997">Cell inner membrane</keyword>
<keyword id="KW-1003">Cell membrane</keyword>
<keyword id="KW-0133">Cell shape</keyword>
<keyword id="KW-0961">Cell wall biogenesis/degradation</keyword>
<keyword id="KW-0460">Magnesium</keyword>
<keyword id="KW-0472">Membrane</keyword>
<keyword id="KW-0479">Metal-binding</keyword>
<keyword id="KW-0573">Peptidoglycan synthesis</keyword>
<keyword id="KW-0808">Transferase</keyword>
<keyword id="KW-0812">Transmembrane</keyword>
<keyword id="KW-1133">Transmembrane helix</keyword>
<feature type="chain" id="PRO_1000090594" description="Phospho-N-acetylmuramoyl-pentapeptide-transferase">
    <location>
        <begin position="1"/>
        <end position="351"/>
    </location>
</feature>
<feature type="transmembrane region" description="Helical" evidence="1">
    <location>
        <begin position="17"/>
        <end position="37"/>
    </location>
</feature>
<feature type="transmembrane region" description="Helical" evidence="1">
    <location>
        <begin position="61"/>
        <end position="83"/>
    </location>
</feature>
<feature type="transmembrane region" description="Helical" evidence="1">
    <location>
        <begin position="88"/>
        <end position="105"/>
    </location>
</feature>
<feature type="transmembrane region" description="Helical" evidence="1">
    <location>
        <begin position="130"/>
        <end position="150"/>
    </location>
</feature>
<feature type="transmembrane region" description="Helical" evidence="1">
    <location>
        <begin position="158"/>
        <end position="178"/>
    </location>
</feature>
<feature type="transmembrane region" description="Helical" evidence="1">
    <location>
        <begin position="190"/>
        <end position="210"/>
    </location>
</feature>
<feature type="transmembrane region" description="Helical" evidence="1">
    <location>
        <begin position="230"/>
        <end position="250"/>
    </location>
</feature>
<feature type="transmembrane region" description="Helical" evidence="1">
    <location>
        <begin position="254"/>
        <end position="274"/>
    </location>
</feature>
<feature type="transmembrane region" description="Helical" evidence="1">
    <location>
        <begin position="279"/>
        <end position="299"/>
    </location>
</feature>
<feature type="transmembrane region" description="Helical" evidence="1">
    <location>
        <begin position="328"/>
        <end position="348"/>
    </location>
</feature>
<protein>
    <recommendedName>
        <fullName evidence="1">Phospho-N-acetylmuramoyl-pentapeptide-transferase</fullName>
        <ecNumber evidence="1">2.7.8.13</ecNumber>
    </recommendedName>
    <alternativeName>
        <fullName evidence="1">UDP-MurNAc-pentapeptide phosphotransferase</fullName>
    </alternativeName>
</protein>
<gene>
    <name evidence="1" type="primary">mraY</name>
    <name type="ordered locus">BDU_306</name>
</gene>
<organism>
    <name type="scientific">Borrelia duttonii (strain Ly)</name>
    <dbReference type="NCBI Taxonomy" id="412419"/>
    <lineage>
        <taxon>Bacteria</taxon>
        <taxon>Pseudomonadati</taxon>
        <taxon>Spirochaetota</taxon>
        <taxon>Spirochaetia</taxon>
        <taxon>Spirochaetales</taxon>
        <taxon>Borreliaceae</taxon>
        <taxon>Borrelia</taxon>
    </lineage>
</organism>
<proteinExistence type="inferred from homology"/>
<reference key="1">
    <citation type="journal article" date="2008" name="PLoS Genet.">
        <title>The genome of Borrelia recurrentis, the agent of deadly louse-borne relapsing fever, is a degraded subset of tick-borne Borrelia duttonii.</title>
        <authorList>
            <person name="Lescot M."/>
            <person name="Audic S."/>
            <person name="Robert C."/>
            <person name="Nguyen T.T."/>
            <person name="Blanc G."/>
            <person name="Cutler S.J."/>
            <person name="Wincker P."/>
            <person name="Couloux A."/>
            <person name="Claverie J.-M."/>
            <person name="Raoult D."/>
            <person name="Drancourt M."/>
        </authorList>
    </citation>
    <scope>NUCLEOTIDE SEQUENCE [LARGE SCALE GENOMIC DNA]</scope>
    <source>
        <strain>Ly</strain>
    </source>
</reference>
<evidence type="ECO:0000255" key="1">
    <source>
        <dbReference type="HAMAP-Rule" id="MF_00038"/>
    </source>
</evidence>
<accession>B5RLC9</accession>
<comment type="function">
    <text evidence="1">Catalyzes the initial step of the lipid cycle reactions in the biosynthesis of the cell wall peptidoglycan: transfers peptidoglycan precursor phospho-MurNAc-pentapeptide from UDP-MurNAc-pentapeptide onto the lipid carrier undecaprenyl phosphate, yielding undecaprenyl-pyrophosphoryl-MurNAc-pentapeptide, known as lipid I.</text>
</comment>
<comment type="catalytic activity">
    <reaction evidence="1">
        <text>UDP-N-acetyl-alpha-D-muramoyl-L-alanyl-gamma-D-glutamyl-meso-2,6-diaminopimeloyl-D-alanyl-D-alanine + di-trans,octa-cis-undecaprenyl phosphate = di-trans,octa-cis-undecaprenyl diphospho-N-acetyl-alpha-D-muramoyl-L-alanyl-D-glutamyl-meso-2,6-diaminopimeloyl-D-alanyl-D-alanine + UMP</text>
        <dbReference type="Rhea" id="RHEA:28386"/>
        <dbReference type="ChEBI" id="CHEBI:57865"/>
        <dbReference type="ChEBI" id="CHEBI:60392"/>
        <dbReference type="ChEBI" id="CHEBI:61386"/>
        <dbReference type="ChEBI" id="CHEBI:61387"/>
        <dbReference type="EC" id="2.7.8.13"/>
    </reaction>
</comment>
<comment type="cofactor">
    <cofactor evidence="1">
        <name>Mg(2+)</name>
        <dbReference type="ChEBI" id="CHEBI:18420"/>
    </cofactor>
</comment>
<comment type="pathway">
    <text evidence="1">Cell wall biogenesis; peptidoglycan biosynthesis.</text>
</comment>
<comment type="subcellular location">
    <subcellularLocation>
        <location evidence="1">Cell inner membrane</location>
        <topology evidence="1">Multi-pass membrane protein</topology>
    </subcellularLocation>
</comment>
<comment type="similarity">
    <text evidence="1">Belongs to the glycosyltransferase 4 family. MraY subfamily.</text>
</comment>